<feature type="chain" id="PRO_0000374733" description="Ribosomal protein uS12 methylthiotransferase RimO">
    <location>
        <begin position="1"/>
        <end position="453"/>
    </location>
</feature>
<feature type="domain" description="MTTase N-terminal" evidence="1">
    <location>
        <begin position="5"/>
        <end position="120"/>
    </location>
</feature>
<feature type="domain" description="Radical SAM core" evidence="2">
    <location>
        <begin position="137"/>
        <end position="383"/>
    </location>
</feature>
<feature type="domain" description="TRAM" evidence="1">
    <location>
        <begin position="385"/>
        <end position="453"/>
    </location>
</feature>
<feature type="binding site" evidence="1">
    <location>
        <position position="14"/>
    </location>
    <ligand>
        <name>[4Fe-4S] cluster</name>
        <dbReference type="ChEBI" id="CHEBI:49883"/>
        <label>1</label>
    </ligand>
</feature>
<feature type="binding site" evidence="1">
    <location>
        <position position="50"/>
    </location>
    <ligand>
        <name>[4Fe-4S] cluster</name>
        <dbReference type="ChEBI" id="CHEBI:49883"/>
        <label>1</label>
    </ligand>
</feature>
<feature type="binding site" evidence="1">
    <location>
        <position position="79"/>
    </location>
    <ligand>
        <name>[4Fe-4S] cluster</name>
        <dbReference type="ChEBI" id="CHEBI:49883"/>
        <label>1</label>
    </ligand>
</feature>
<feature type="binding site" evidence="1">
    <location>
        <position position="151"/>
    </location>
    <ligand>
        <name>[4Fe-4S] cluster</name>
        <dbReference type="ChEBI" id="CHEBI:49883"/>
        <label>2</label>
        <note>4Fe-4S-S-AdoMet</note>
    </ligand>
</feature>
<feature type="binding site" evidence="1">
    <location>
        <position position="155"/>
    </location>
    <ligand>
        <name>[4Fe-4S] cluster</name>
        <dbReference type="ChEBI" id="CHEBI:49883"/>
        <label>2</label>
        <note>4Fe-4S-S-AdoMet</note>
    </ligand>
</feature>
<feature type="binding site" evidence="1">
    <location>
        <position position="158"/>
    </location>
    <ligand>
        <name>[4Fe-4S] cluster</name>
        <dbReference type="ChEBI" id="CHEBI:49883"/>
        <label>2</label>
        <note>4Fe-4S-S-AdoMet</note>
    </ligand>
</feature>
<keyword id="KW-0004">4Fe-4S</keyword>
<keyword id="KW-0963">Cytoplasm</keyword>
<keyword id="KW-0408">Iron</keyword>
<keyword id="KW-0411">Iron-sulfur</keyword>
<keyword id="KW-0479">Metal-binding</keyword>
<keyword id="KW-0949">S-adenosyl-L-methionine</keyword>
<keyword id="KW-0808">Transferase</keyword>
<sequence length="453" mass="49501">MSQSPKVGFVSLGCPKALVDSEQIITQLRAEGYEISGTYDGADLVVVNTCGFIDEAVQESLDAIGEALTENGKVIVTGCLGAKSSASGSNLIEEVHPKVLAVTGPHAVGEVMQAVHSHLPKPHDPFVDLVPAAGIKLTPRHYAYLKISEGCNHRCTFCIIPSMRGDLVSRPVAEVMLEAENLFKSGVKELLVISQDTSAYGVDVKYRTGFWNGKPIKTRMTDLVAALGELAAQYGAWVRLHYVYPYPSVDEVIPLMAEGPFKGHVLPYLDVPFQHAHPEVLKRMKRPANAEKVLERVQKWREICPDLTIRSTFIAGFPGETEEQFETLLDFVREAELDRVGCFAYSPVEGATANDLDGALPDEVREERRARFMEVAEEVSAHRMQRKVGKTLKVLIDEVGEEGGIGRTAADAPEIDGVVYVEPAAKASKRYKVGDFVSVKITGADGHDLWGEV</sequence>
<accession>B4EAF5</accession>
<name>RIMO_BURCJ</name>
<proteinExistence type="inferred from homology"/>
<evidence type="ECO:0000255" key="1">
    <source>
        <dbReference type="HAMAP-Rule" id="MF_01865"/>
    </source>
</evidence>
<evidence type="ECO:0000255" key="2">
    <source>
        <dbReference type="PROSITE-ProRule" id="PRU01266"/>
    </source>
</evidence>
<reference key="1">
    <citation type="journal article" date="2009" name="J. Bacteriol.">
        <title>The genome of Burkholderia cenocepacia J2315, an epidemic pathogen of cystic fibrosis patients.</title>
        <authorList>
            <person name="Holden M.T."/>
            <person name="Seth-Smith H.M."/>
            <person name="Crossman L.C."/>
            <person name="Sebaihia M."/>
            <person name="Bentley S.D."/>
            <person name="Cerdeno-Tarraga A.M."/>
            <person name="Thomson N.R."/>
            <person name="Bason N."/>
            <person name="Quail M.A."/>
            <person name="Sharp S."/>
            <person name="Cherevach I."/>
            <person name="Churcher C."/>
            <person name="Goodhead I."/>
            <person name="Hauser H."/>
            <person name="Holroyd N."/>
            <person name="Mungall K."/>
            <person name="Scott P."/>
            <person name="Walker D."/>
            <person name="White B."/>
            <person name="Rose H."/>
            <person name="Iversen P."/>
            <person name="Mil-Homens D."/>
            <person name="Rocha E.P."/>
            <person name="Fialho A.M."/>
            <person name="Baldwin A."/>
            <person name="Dowson C."/>
            <person name="Barrell B.G."/>
            <person name="Govan J.R."/>
            <person name="Vandamme P."/>
            <person name="Hart C.A."/>
            <person name="Mahenthiralingam E."/>
            <person name="Parkhill J."/>
        </authorList>
    </citation>
    <scope>NUCLEOTIDE SEQUENCE [LARGE SCALE GENOMIC DNA]</scope>
    <source>
        <strain>ATCC BAA-245 / DSM 16553 / LMG 16656 / NCTC 13227 / J2315 / CF5610</strain>
    </source>
</reference>
<protein>
    <recommendedName>
        <fullName evidence="1">Ribosomal protein uS12 methylthiotransferase RimO</fullName>
        <shortName evidence="1">uS12 MTTase</shortName>
        <shortName evidence="1">uS12 methylthiotransferase</shortName>
        <ecNumber evidence="1">2.8.4.4</ecNumber>
    </recommendedName>
    <alternativeName>
        <fullName evidence="1">Ribosomal protein uS12 (aspartate-C(3))-methylthiotransferase</fullName>
    </alternativeName>
    <alternativeName>
        <fullName evidence="1">Ribosome maturation factor RimO</fullName>
    </alternativeName>
</protein>
<organism>
    <name type="scientific">Burkholderia cenocepacia (strain ATCC BAA-245 / DSM 16553 / LMG 16656 / NCTC 13227 / J2315 / CF5610)</name>
    <name type="common">Burkholderia cepacia (strain J2315)</name>
    <dbReference type="NCBI Taxonomy" id="216591"/>
    <lineage>
        <taxon>Bacteria</taxon>
        <taxon>Pseudomonadati</taxon>
        <taxon>Pseudomonadota</taxon>
        <taxon>Betaproteobacteria</taxon>
        <taxon>Burkholderiales</taxon>
        <taxon>Burkholderiaceae</taxon>
        <taxon>Burkholderia</taxon>
        <taxon>Burkholderia cepacia complex</taxon>
    </lineage>
</organism>
<dbReference type="EC" id="2.8.4.4" evidence="1"/>
<dbReference type="EMBL" id="AM747720">
    <property type="protein sequence ID" value="CAR52156.1"/>
    <property type="molecule type" value="Genomic_DNA"/>
</dbReference>
<dbReference type="RefSeq" id="WP_006485253.1">
    <property type="nucleotide sequence ID" value="NC_011000.1"/>
</dbReference>
<dbReference type="SMR" id="B4EAF5"/>
<dbReference type="KEGG" id="bcj:BCAL1856"/>
<dbReference type="eggNOG" id="COG0621">
    <property type="taxonomic scope" value="Bacteria"/>
</dbReference>
<dbReference type="HOGENOM" id="CLU_018697_0_0_4"/>
<dbReference type="BioCyc" id="BCEN216591:G1G1V-2045-MONOMER"/>
<dbReference type="Proteomes" id="UP000001035">
    <property type="component" value="Chromosome 1"/>
</dbReference>
<dbReference type="GO" id="GO:0005829">
    <property type="term" value="C:cytosol"/>
    <property type="evidence" value="ECO:0007669"/>
    <property type="project" value="TreeGrafter"/>
</dbReference>
<dbReference type="GO" id="GO:0051539">
    <property type="term" value="F:4 iron, 4 sulfur cluster binding"/>
    <property type="evidence" value="ECO:0007669"/>
    <property type="project" value="UniProtKB-UniRule"/>
</dbReference>
<dbReference type="GO" id="GO:0035599">
    <property type="term" value="F:aspartic acid methylthiotransferase activity"/>
    <property type="evidence" value="ECO:0007669"/>
    <property type="project" value="TreeGrafter"/>
</dbReference>
<dbReference type="GO" id="GO:0046872">
    <property type="term" value="F:metal ion binding"/>
    <property type="evidence" value="ECO:0007669"/>
    <property type="project" value="UniProtKB-KW"/>
</dbReference>
<dbReference type="GO" id="GO:0103039">
    <property type="term" value="F:protein methylthiotransferase activity"/>
    <property type="evidence" value="ECO:0007669"/>
    <property type="project" value="UniProtKB-EC"/>
</dbReference>
<dbReference type="GO" id="GO:0006400">
    <property type="term" value="P:tRNA modification"/>
    <property type="evidence" value="ECO:0007669"/>
    <property type="project" value="InterPro"/>
</dbReference>
<dbReference type="CDD" id="cd01335">
    <property type="entry name" value="Radical_SAM"/>
    <property type="match status" value="1"/>
</dbReference>
<dbReference type="FunFam" id="3.40.50.12160:FF:000002">
    <property type="entry name" value="Ribosomal protein S12 methylthiotransferase RimO"/>
    <property type="match status" value="1"/>
</dbReference>
<dbReference type="FunFam" id="3.80.30.20:FF:000001">
    <property type="entry name" value="tRNA-2-methylthio-N(6)-dimethylallyladenosine synthase 2"/>
    <property type="match status" value="1"/>
</dbReference>
<dbReference type="Gene3D" id="3.40.50.12160">
    <property type="entry name" value="Methylthiotransferase, N-terminal domain"/>
    <property type="match status" value="1"/>
</dbReference>
<dbReference type="Gene3D" id="2.40.50.140">
    <property type="entry name" value="Nucleic acid-binding proteins"/>
    <property type="match status" value="1"/>
</dbReference>
<dbReference type="Gene3D" id="3.80.30.20">
    <property type="entry name" value="tm_1862 like domain"/>
    <property type="match status" value="1"/>
</dbReference>
<dbReference type="HAMAP" id="MF_01865">
    <property type="entry name" value="MTTase_RimO"/>
    <property type="match status" value="1"/>
</dbReference>
<dbReference type="InterPro" id="IPR006638">
    <property type="entry name" value="Elp3/MiaA/NifB-like_rSAM"/>
</dbReference>
<dbReference type="InterPro" id="IPR005839">
    <property type="entry name" value="Methylthiotransferase"/>
</dbReference>
<dbReference type="InterPro" id="IPR020612">
    <property type="entry name" value="Methylthiotransferase_CS"/>
</dbReference>
<dbReference type="InterPro" id="IPR013848">
    <property type="entry name" value="Methylthiotransferase_N"/>
</dbReference>
<dbReference type="InterPro" id="IPR038135">
    <property type="entry name" value="Methylthiotransferase_N_sf"/>
</dbReference>
<dbReference type="InterPro" id="IPR012340">
    <property type="entry name" value="NA-bd_OB-fold"/>
</dbReference>
<dbReference type="InterPro" id="IPR005840">
    <property type="entry name" value="Ribosomal_uS12_MeSTrfase_RimO"/>
</dbReference>
<dbReference type="InterPro" id="IPR007197">
    <property type="entry name" value="rSAM"/>
</dbReference>
<dbReference type="InterPro" id="IPR023404">
    <property type="entry name" value="rSAM_horseshoe"/>
</dbReference>
<dbReference type="InterPro" id="IPR002792">
    <property type="entry name" value="TRAM_dom"/>
</dbReference>
<dbReference type="NCBIfam" id="TIGR01125">
    <property type="entry name" value="30S ribosomal protein S12 methylthiotransferase RimO"/>
    <property type="match status" value="1"/>
</dbReference>
<dbReference type="NCBIfam" id="TIGR00089">
    <property type="entry name" value="MiaB/RimO family radical SAM methylthiotransferase"/>
    <property type="match status" value="1"/>
</dbReference>
<dbReference type="PANTHER" id="PTHR43837">
    <property type="entry name" value="RIBOSOMAL PROTEIN S12 METHYLTHIOTRANSFERASE RIMO"/>
    <property type="match status" value="1"/>
</dbReference>
<dbReference type="PANTHER" id="PTHR43837:SF1">
    <property type="entry name" value="RIBOSOMAL PROTEIN US12 METHYLTHIOTRANSFERASE RIMO"/>
    <property type="match status" value="1"/>
</dbReference>
<dbReference type="Pfam" id="PF04055">
    <property type="entry name" value="Radical_SAM"/>
    <property type="match status" value="1"/>
</dbReference>
<dbReference type="Pfam" id="PF18693">
    <property type="entry name" value="TRAM_2"/>
    <property type="match status" value="1"/>
</dbReference>
<dbReference type="Pfam" id="PF00919">
    <property type="entry name" value="UPF0004"/>
    <property type="match status" value="1"/>
</dbReference>
<dbReference type="SFLD" id="SFLDG01082">
    <property type="entry name" value="B12-binding_domain_containing"/>
    <property type="match status" value="1"/>
</dbReference>
<dbReference type="SFLD" id="SFLDS00029">
    <property type="entry name" value="Radical_SAM"/>
    <property type="match status" value="1"/>
</dbReference>
<dbReference type="SFLD" id="SFLDF00274">
    <property type="entry name" value="ribosomal_protein_S12_methylth"/>
    <property type="match status" value="1"/>
</dbReference>
<dbReference type="SMART" id="SM00729">
    <property type="entry name" value="Elp3"/>
    <property type="match status" value="1"/>
</dbReference>
<dbReference type="SUPFAM" id="SSF102114">
    <property type="entry name" value="Radical SAM enzymes"/>
    <property type="match status" value="1"/>
</dbReference>
<dbReference type="PROSITE" id="PS51449">
    <property type="entry name" value="MTTASE_N"/>
    <property type="match status" value="1"/>
</dbReference>
<dbReference type="PROSITE" id="PS01278">
    <property type="entry name" value="MTTASE_RADICAL"/>
    <property type="match status" value="1"/>
</dbReference>
<dbReference type="PROSITE" id="PS51918">
    <property type="entry name" value="RADICAL_SAM"/>
    <property type="match status" value="1"/>
</dbReference>
<dbReference type="PROSITE" id="PS50926">
    <property type="entry name" value="TRAM"/>
    <property type="match status" value="1"/>
</dbReference>
<gene>
    <name evidence="1" type="primary">rimO</name>
    <name type="ordered locus">BceJ2315_18190</name>
    <name type="ORF">BCAL1856</name>
</gene>
<comment type="function">
    <text evidence="1">Catalyzes the methylthiolation of an aspartic acid residue of ribosomal protein uS12.</text>
</comment>
<comment type="catalytic activity">
    <reaction evidence="1">
        <text>L-aspartate(89)-[ribosomal protein uS12]-hydrogen + (sulfur carrier)-SH + AH2 + 2 S-adenosyl-L-methionine = 3-methylsulfanyl-L-aspartate(89)-[ribosomal protein uS12]-hydrogen + (sulfur carrier)-H + 5'-deoxyadenosine + L-methionine + A + S-adenosyl-L-homocysteine + 2 H(+)</text>
        <dbReference type="Rhea" id="RHEA:37087"/>
        <dbReference type="Rhea" id="RHEA-COMP:10460"/>
        <dbReference type="Rhea" id="RHEA-COMP:10461"/>
        <dbReference type="Rhea" id="RHEA-COMP:14737"/>
        <dbReference type="Rhea" id="RHEA-COMP:14739"/>
        <dbReference type="ChEBI" id="CHEBI:13193"/>
        <dbReference type="ChEBI" id="CHEBI:15378"/>
        <dbReference type="ChEBI" id="CHEBI:17319"/>
        <dbReference type="ChEBI" id="CHEBI:17499"/>
        <dbReference type="ChEBI" id="CHEBI:29917"/>
        <dbReference type="ChEBI" id="CHEBI:29961"/>
        <dbReference type="ChEBI" id="CHEBI:57844"/>
        <dbReference type="ChEBI" id="CHEBI:57856"/>
        <dbReference type="ChEBI" id="CHEBI:59789"/>
        <dbReference type="ChEBI" id="CHEBI:64428"/>
        <dbReference type="ChEBI" id="CHEBI:73599"/>
        <dbReference type="EC" id="2.8.4.4"/>
    </reaction>
</comment>
<comment type="cofactor">
    <cofactor evidence="1">
        <name>[4Fe-4S] cluster</name>
        <dbReference type="ChEBI" id="CHEBI:49883"/>
    </cofactor>
    <text evidence="1">Binds 2 [4Fe-4S] clusters. One cluster is coordinated with 3 cysteines and an exchangeable S-adenosyl-L-methionine.</text>
</comment>
<comment type="subcellular location">
    <subcellularLocation>
        <location evidence="1">Cytoplasm</location>
    </subcellularLocation>
</comment>
<comment type="similarity">
    <text evidence="1">Belongs to the methylthiotransferase family. RimO subfamily.</text>
</comment>